<name>AROC_CAUVN</name>
<proteinExistence type="inferred from homology"/>
<keyword id="KW-0028">Amino-acid biosynthesis</keyword>
<keyword id="KW-0057">Aromatic amino acid biosynthesis</keyword>
<keyword id="KW-0274">FAD</keyword>
<keyword id="KW-0285">Flavoprotein</keyword>
<keyword id="KW-0288">FMN</keyword>
<keyword id="KW-0456">Lyase</keyword>
<keyword id="KW-0521">NADP</keyword>
<keyword id="KW-1185">Reference proteome</keyword>
<feature type="chain" id="PRO_1000132761" description="Chorismate synthase">
    <location>
        <begin position="1"/>
        <end position="372"/>
    </location>
</feature>
<feature type="binding site" evidence="1">
    <location>
        <position position="48"/>
    </location>
    <ligand>
        <name>NADP(+)</name>
        <dbReference type="ChEBI" id="CHEBI:58349"/>
    </ligand>
</feature>
<feature type="binding site" evidence="1">
    <location>
        <begin position="131"/>
        <end position="133"/>
    </location>
    <ligand>
        <name>FMN</name>
        <dbReference type="ChEBI" id="CHEBI:58210"/>
    </ligand>
</feature>
<feature type="binding site" evidence="1">
    <location>
        <begin position="243"/>
        <end position="244"/>
    </location>
    <ligand>
        <name>FMN</name>
        <dbReference type="ChEBI" id="CHEBI:58210"/>
    </ligand>
</feature>
<feature type="binding site" evidence="1">
    <location>
        <position position="288"/>
    </location>
    <ligand>
        <name>FMN</name>
        <dbReference type="ChEBI" id="CHEBI:58210"/>
    </ligand>
</feature>
<feature type="binding site" evidence="1">
    <location>
        <begin position="303"/>
        <end position="307"/>
    </location>
    <ligand>
        <name>FMN</name>
        <dbReference type="ChEBI" id="CHEBI:58210"/>
    </ligand>
</feature>
<feature type="binding site" evidence="1">
    <location>
        <position position="329"/>
    </location>
    <ligand>
        <name>FMN</name>
        <dbReference type="ChEBI" id="CHEBI:58210"/>
    </ligand>
</feature>
<reference key="1">
    <citation type="journal article" date="2010" name="J. Bacteriol.">
        <title>The genetic basis of laboratory adaptation in Caulobacter crescentus.</title>
        <authorList>
            <person name="Marks M.E."/>
            <person name="Castro-Rojas C.M."/>
            <person name="Teiling C."/>
            <person name="Du L."/>
            <person name="Kapatral V."/>
            <person name="Walunas T.L."/>
            <person name="Crosson S."/>
        </authorList>
    </citation>
    <scope>NUCLEOTIDE SEQUENCE [LARGE SCALE GENOMIC DNA]</scope>
    <source>
        <strain>NA1000 / CB15N</strain>
    </source>
</reference>
<gene>
    <name evidence="1" type="primary">aroC</name>
    <name type="ordered locus">CCNA_03256</name>
</gene>
<comment type="function">
    <text evidence="1">Catalyzes the anti-1,4-elimination of the C-3 phosphate and the C-6 proR hydrogen from 5-enolpyruvylshikimate-3-phosphate (EPSP) to yield chorismate, which is the branch point compound that serves as the starting substrate for the three terminal pathways of aromatic amino acid biosynthesis. This reaction introduces a second double bond into the aromatic ring system.</text>
</comment>
<comment type="catalytic activity">
    <reaction evidence="1">
        <text>5-O-(1-carboxyvinyl)-3-phosphoshikimate = chorismate + phosphate</text>
        <dbReference type="Rhea" id="RHEA:21020"/>
        <dbReference type="ChEBI" id="CHEBI:29748"/>
        <dbReference type="ChEBI" id="CHEBI:43474"/>
        <dbReference type="ChEBI" id="CHEBI:57701"/>
        <dbReference type="EC" id="4.2.3.5"/>
    </reaction>
</comment>
<comment type="cofactor">
    <cofactor evidence="1">
        <name>FMNH2</name>
        <dbReference type="ChEBI" id="CHEBI:57618"/>
    </cofactor>
    <text evidence="1">Reduced FMN (FMNH(2)).</text>
</comment>
<comment type="pathway">
    <text evidence="1">Metabolic intermediate biosynthesis; chorismate biosynthesis; chorismate from D-erythrose 4-phosphate and phosphoenolpyruvate: step 7/7.</text>
</comment>
<comment type="subunit">
    <text evidence="1">Homotetramer.</text>
</comment>
<comment type="similarity">
    <text evidence="1">Belongs to the chorismate synthase family.</text>
</comment>
<protein>
    <recommendedName>
        <fullName evidence="1">Chorismate synthase</fullName>
        <shortName evidence="1">CS</shortName>
        <ecNumber evidence="1">4.2.3.5</ecNumber>
    </recommendedName>
    <alternativeName>
        <fullName evidence="1">5-enolpyruvylshikimate-3-phosphate phospholyase</fullName>
    </alternativeName>
</protein>
<accession>B8H3W7</accession>
<organism>
    <name type="scientific">Caulobacter vibrioides (strain NA1000 / CB15N)</name>
    <name type="common">Caulobacter crescentus</name>
    <dbReference type="NCBI Taxonomy" id="565050"/>
    <lineage>
        <taxon>Bacteria</taxon>
        <taxon>Pseudomonadati</taxon>
        <taxon>Pseudomonadota</taxon>
        <taxon>Alphaproteobacteria</taxon>
        <taxon>Caulobacterales</taxon>
        <taxon>Caulobacteraceae</taxon>
        <taxon>Caulobacter</taxon>
    </lineage>
</organism>
<sequence length="372" mass="39694">MSHNTFGHLFRVTTWGESHGPALGCVVDGCPPGIALTAEMIQVFLDKRRPGNGKFVTQRQEPDAVRILSGVFEDARSNGQRTTGTPISLMIENTDQRSKDYSEIAQAFRPGHADYAYFAKYGVRDYRGGGRSSARETAARVAAGAVARLIIPGVTVRAALVQIGPHKIDRSNWDWAQTEQNPYWSPDAAIVPVWEEHLEKIRKAGSSTGAVVEVEATGVPAGWGAPLYAKLDAELAAALMSINAAKGVEIGDGFDSAALTGEDNADTMRMGDDGQPVFQSNHAGGILGGISSGQPIVARVAFKPTSSILIPRETVNEAGEEIELRTKGRHDPCVGIRGVPVVEAMTACVLADAFLRHRGQTGREHFPLGASA</sequence>
<evidence type="ECO:0000255" key="1">
    <source>
        <dbReference type="HAMAP-Rule" id="MF_00300"/>
    </source>
</evidence>
<dbReference type="EC" id="4.2.3.5" evidence="1"/>
<dbReference type="EMBL" id="CP001340">
    <property type="protein sequence ID" value="ACL96721.1"/>
    <property type="molecule type" value="Genomic_DNA"/>
</dbReference>
<dbReference type="RefSeq" id="WP_010920990.1">
    <property type="nucleotide sequence ID" value="NC_011916.1"/>
</dbReference>
<dbReference type="RefSeq" id="YP_002518629.1">
    <property type="nucleotide sequence ID" value="NC_011916.1"/>
</dbReference>
<dbReference type="SMR" id="B8H3W7"/>
<dbReference type="GeneID" id="7330850"/>
<dbReference type="KEGG" id="ccs:CCNA_03256"/>
<dbReference type="PATRIC" id="fig|565050.3.peg.3180"/>
<dbReference type="HOGENOM" id="CLU_034547_0_0_5"/>
<dbReference type="OrthoDB" id="9771806at2"/>
<dbReference type="PhylomeDB" id="B8H3W7"/>
<dbReference type="UniPathway" id="UPA00053">
    <property type="reaction ID" value="UER00090"/>
</dbReference>
<dbReference type="Proteomes" id="UP000001364">
    <property type="component" value="Chromosome"/>
</dbReference>
<dbReference type="GO" id="GO:0005829">
    <property type="term" value="C:cytosol"/>
    <property type="evidence" value="ECO:0007669"/>
    <property type="project" value="TreeGrafter"/>
</dbReference>
<dbReference type="GO" id="GO:0004107">
    <property type="term" value="F:chorismate synthase activity"/>
    <property type="evidence" value="ECO:0007669"/>
    <property type="project" value="UniProtKB-UniRule"/>
</dbReference>
<dbReference type="GO" id="GO:0010181">
    <property type="term" value="F:FMN binding"/>
    <property type="evidence" value="ECO:0007669"/>
    <property type="project" value="TreeGrafter"/>
</dbReference>
<dbReference type="GO" id="GO:0008652">
    <property type="term" value="P:amino acid biosynthetic process"/>
    <property type="evidence" value="ECO:0007669"/>
    <property type="project" value="UniProtKB-KW"/>
</dbReference>
<dbReference type="GO" id="GO:0009073">
    <property type="term" value="P:aromatic amino acid family biosynthetic process"/>
    <property type="evidence" value="ECO:0007669"/>
    <property type="project" value="UniProtKB-KW"/>
</dbReference>
<dbReference type="GO" id="GO:0009423">
    <property type="term" value="P:chorismate biosynthetic process"/>
    <property type="evidence" value="ECO:0007669"/>
    <property type="project" value="UniProtKB-UniRule"/>
</dbReference>
<dbReference type="CDD" id="cd07304">
    <property type="entry name" value="Chorismate_synthase"/>
    <property type="match status" value="1"/>
</dbReference>
<dbReference type="Gene3D" id="3.60.150.10">
    <property type="entry name" value="Chorismate synthase AroC"/>
    <property type="match status" value="1"/>
</dbReference>
<dbReference type="HAMAP" id="MF_00300">
    <property type="entry name" value="Chorismate_synth"/>
    <property type="match status" value="1"/>
</dbReference>
<dbReference type="InterPro" id="IPR000453">
    <property type="entry name" value="Chorismate_synth"/>
</dbReference>
<dbReference type="InterPro" id="IPR035904">
    <property type="entry name" value="Chorismate_synth_AroC_sf"/>
</dbReference>
<dbReference type="InterPro" id="IPR020541">
    <property type="entry name" value="Chorismate_synthase_CS"/>
</dbReference>
<dbReference type="NCBIfam" id="TIGR00033">
    <property type="entry name" value="aroC"/>
    <property type="match status" value="1"/>
</dbReference>
<dbReference type="NCBIfam" id="NF003793">
    <property type="entry name" value="PRK05382.1"/>
    <property type="match status" value="1"/>
</dbReference>
<dbReference type="PANTHER" id="PTHR21085">
    <property type="entry name" value="CHORISMATE SYNTHASE"/>
    <property type="match status" value="1"/>
</dbReference>
<dbReference type="PANTHER" id="PTHR21085:SF0">
    <property type="entry name" value="CHORISMATE SYNTHASE"/>
    <property type="match status" value="1"/>
</dbReference>
<dbReference type="Pfam" id="PF01264">
    <property type="entry name" value="Chorismate_synt"/>
    <property type="match status" value="1"/>
</dbReference>
<dbReference type="PIRSF" id="PIRSF001456">
    <property type="entry name" value="Chorismate_synth"/>
    <property type="match status" value="1"/>
</dbReference>
<dbReference type="SUPFAM" id="SSF103263">
    <property type="entry name" value="Chorismate synthase, AroC"/>
    <property type="match status" value="1"/>
</dbReference>
<dbReference type="PROSITE" id="PS00787">
    <property type="entry name" value="CHORISMATE_SYNTHASE_1"/>
    <property type="match status" value="1"/>
</dbReference>
<dbReference type="PROSITE" id="PS00788">
    <property type="entry name" value="CHORISMATE_SYNTHASE_2"/>
    <property type="match status" value="1"/>
</dbReference>
<dbReference type="PROSITE" id="PS00789">
    <property type="entry name" value="CHORISMATE_SYNTHASE_3"/>
    <property type="match status" value="1"/>
</dbReference>